<sequence length="748" mass="85941">MSQWNQVQQLEIKFLEQVDQFYDDNFPMEIRHLLAQWIENQDWEAASNNETMATILLQNLLIQLDEQLGRVSKEKNLLLIHNLKRIRKVLQGKFHGNPMHVAVVISNCLREERRILAAANMPVQGPLEKSLQSSSVSERQRNVEHKVAAIKNSVQMTEQDTKYLEDLQDEFDYRYKTIQTMDQSDKNSAMVNQEVLTLQEMLNSLDFKRKEALSKMTQIIHETDLLMNTMLIEELQDWKRRQQIACIGGPLHNGLDQLQNCFTLLAESLFQLRRQLEKLEEQSTKMTYEGDPIPMQRTHMLERVTFLIYNLFKNSFVVERQPCMPTHPQRPLVLKTLIQFTVKLRLLIKLPELNYQVKVKASIDKNVSTLSNRRFVLCGTNVKAMSIEESSNGSLSVEFRHLQPKEMKSSAGGKGNEGCHMVTEELHSITFETQICLYGLTIDLETSSLPVVMISNVSQLPNAWASIIWYNVSTNDSQNLVFFNNPPPATLSQLLEVMSWQFSSYVGRGLNSDQLHMLAEKLTVQSSYSDGHLTWAKFCKEHLPGKSFTFWTWLEAILDLIKKHILPLWIDGYVMGFVSKEKERLLLKDKMPGTFLLRFSESHLGGITFTWVDHSESGEVRFHSVEPYNKGRLSALPFADILRDYKVIMAENIPENPLKYLYPDIPKDKAFGKHYSSQPCEVSRPTERGDKGYVPSVFIPISTIRSDSTEPHSPSDLLPMSPSVYAVLRENLSPTTIETAMKSPYSAE</sequence>
<reference key="1">
    <citation type="submission" date="1996-08" db="EMBL/GenBank/DDBJ databases">
        <title>The STAT amino-terminal domain mediates cooperative DNA binding and confers selective sequence recognition.</title>
        <authorList>
            <person name="Xu X."/>
            <person name="Sun Y.L."/>
            <person name="Hoey T."/>
        </authorList>
    </citation>
    <scope>NUCLEOTIDE SEQUENCE [MRNA]</scope>
</reference>
<reference key="2">
    <citation type="journal article" date="2004" name="Genome Res.">
        <title>The status, quality, and expansion of the NIH full-length cDNA project: the Mammalian Gene Collection (MGC).</title>
        <authorList>
            <consortium name="The MGC Project Team"/>
        </authorList>
    </citation>
    <scope>NUCLEOTIDE SEQUENCE [LARGE SCALE MRNA]</scope>
    <source>
        <tissue>Testis</tissue>
    </source>
</reference>
<reference key="3">
    <citation type="submission" date="2001-09" db="EMBL/GenBank/DDBJ databases">
        <authorList>
            <consortium name="SeattleSNPs variation discovery resource"/>
        </authorList>
    </citation>
    <scope>NUCLEOTIDE SEQUENCE [GENOMIC DNA] OF 91-748</scope>
</reference>
<reference key="4">
    <citation type="journal article" date="1995" name="Proc. Natl. Acad. Sci. U.S.A.">
        <title>Interleukin 12 induces tyrosine phosphorylation and activation of STAT4 in human lymphocytes.</title>
        <authorList>
            <person name="Bacon C.M."/>
            <person name="Petricoin E.F. III"/>
            <person name="Ortaldo J.R."/>
            <person name="Rees R.C."/>
            <person name="Larner A.C."/>
            <person name="Johnston J.A."/>
            <person name="O'Shea J.J."/>
        </authorList>
    </citation>
    <scope>FUNCTION</scope>
    <scope>PHOSPHORYLATION</scope>
</reference>
<reference key="5">
    <citation type="journal article" date="1996" name="J. Immunol.">
        <title>Activation of STAT4 by IL-12 and IFN-alpha: evidence for the involvement of ligand-induced tyrosine and serine phosphorylation.</title>
        <authorList>
            <person name="Cho S.S."/>
            <person name="Bacon C.M."/>
            <person name="Sudarshan C."/>
            <person name="Rees R.C."/>
            <person name="Finbloom D."/>
            <person name="Pine R."/>
            <person name="O'Shea J.J."/>
        </authorList>
    </citation>
    <scope>FUNCTION</scope>
    <scope>PHOSPHORYLATION</scope>
</reference>
<reference key="6">
    <citation type="journal article" date="1999" name="Arch. Biochem. Biophys.">
        <title>Direct interaction of STAT4 with the IL-12 receptor.</title>
        <authorList>
            <person name="Yao B.B."/>
            <person name="Niu P."/>
            <person name="Surowy C.S."/>
            <person name="Faltynek C.R."/>
        </authorList>
    </citation>
    <scope>INTERACTION WITH IL12RB2</scope>
    <scope>FUNCTION</scope>
</reference>
<reference key="7">
    <citation type="journal article" date="1999" name="J. Biol. Chem.">
        <title>Identification of a STAT4 binding site in the interleukin-12 receptor required for signaling.</title>
        <authorList>
            <person name="Naeger L.K."/>
            <person name="McKinney J."/>
            <person name="Salvekar A."/>
            <person name="Hoey T."/>
        </authorList>
    </citation>
    <scope>INTERACTION WITH IL12RB2</scope>
</reference>
<reference key="8">
    <citation type="journal article" date="2000" name="Blood">
        <title>Importance of the MKK6/p38 pathway for interleukin-12-induced STAT4 serine phosphorylation and transcriptional activity.</title>
        <authorList>
            <person name="Visconti R."/>
            <person name="Gadina M."/>
            <person name="Chiariello M."/>
            <person name="Chen E.H."/>
            <person name="Stancato L.F."/>
            <person name="Gutkind J.S."/>
            <person name="O'Shea J.J."/>
        </authorList>
    </citation>
    <scope>FUNCTION</scope>
    <scope>PHOSPHORYLATION AT TYR-693 AND SER-721</scope>
    <scope>MUTAGENESIS OF TYR-693 AND SER-721</scope>
</reference>
<reference key="9">
    <citation type="journal article" date="2000" name="Immunity">
        <title>Novel p19 protein engages IL-12p40 to form a cytokine, IL-23, with biological activities similar as well as distinct from IL-12.</title>
        <authorList>
            <person name="Oppmann B."/>
            <person name="Lesley R."/>
            <person name="Blom B."/>
            <person name="Timans J.C."/>
            <person name="Xu Y."/>
            <person name="Hunte B."/>
            <person name="Vega F."/>
            <person name="Yu N."/>
            <person name="Wang J."/>
            <person name="Singh K.P."/>
            <person name="Zonin F."/>
            <person name="Vaisberg E."/>
            <person name="Churakova T."/>
            <person name="Liu M.-R."/>
            <person name="Gorman D."/>
            <person name="Wagner J."/>
            <person name="Zurawski S."/>
            <person name="Liu Y.-J."/>
            <person name="Abrams J.S."/>
            <person name="Moore K.W."/>
            <person name="Rennick D.M."/>
            <person name="de Waal-Malefyt R."/>
            <person name="Hannum C."/>
            <person name="Bazan J.F."/>
            <person name="Kastelein R.A."/>
        </authorList>
    </citation>
    <scope>FUNCTION</scope>
</reference>
<reference key="10">
    <citation type="journal article" date="2002" name="Proc. Natl. Acad. Sci. U.S.A.">
        <title>STAT4 serine phosphorylation is critical for IL-12-induced IFN-gamma production but not for cell proliferation.</title>
        <authorList>
            <person name="Morinobu A."/>
            <person name="Gadina M."/>
            <person name="Strober W."/>
            <person name="Visconti R."/>
            <person name="Fornace A."/>
            <person name="Montagna C."/>
            <person name="Feldman G.M."/>
            <person name="Nishikomori R."/>
            <person name="O'Shea J.J."/>
        </authorList>
    </citation>
    <scope>FUNCTION</scope>
    <scope>PHOSPHORYLATION AT SER-721</scope>
</reference>
<reference key="11">
    <citation type="journal article" date="2009" name="J. Immunol.">
        <title>Cutting edge: autoimmune disease risk variant of STAT4 confers increased sensitivity to IFN-alpha in lupus patients in vivo.</title>
        <authorList>
            <person name="Kariuki S.N."/>
            <person name="Kirou K.A."/>
            <person name="MacDermott E.J."/>
            <person name="Barillas-Arias L."/>
            <person name="Crow M.K."/>
            <person name="Niewold T.B."/>
        </authorList>
    </citation>
    <scope>INVOLVEMENT IN SLEB11</scope>
</reference>
<reference key="12">
    <citation type="journal article" date="2016" name="Eur. J. Immunol.">
        <title>STAT4-mediated transcriptional repression of the IL5 gene in human memory Th2 cells.</title>
        <authorList>
            <person name="Gonzales-van Horn S.R."/>
            <person name="Estrada L.D."/>
            <person name="van Oers N.S."/>
            <person name="Farrar J.D."/>
        </authorList>
    </citation>
    <scope>FUNCTION</scope>
</reference>
<reference key="13">
    <citation type="journal article" date="2021" name="Exp. Cell Res.">
        <title>Interleukin-35 inhibits lipopolysaccharide-induced endothelial cell activation by downregulating inflammation and apoptosis.</title>
        <authorList>
            <person name="Li M."/>
            <person name="Liu Y."/>
            <person name="Fu Y."/>
            <person name="Gong R."/>
            <person name="Xia H."/>
            <person name="Huang X."/>
            <person name="Wu Y."/>
        </authorList>
    </citation>
    <scope>FUNCTION</scope>
    <scope>INTERACTION WITH STAT1</scope>
</reference>
<reference key="14">
    <citation type="journal article" date="2022" name="Cell Death Differ.">
        <title>Acetylation licenses Th1 cell polarization to constrain Listeria monocytogenes infection.</title>
        <authorList>
            <person name="Zhang Y.S."/>
            <person name="Xin D.E."/>
            <person name="Wang Z."/>
            <person name="Peng W."/>
            <person name="Zeng Y."/>
            <person name="Liang J."/>
            <person name="Xu M."/>
            <person name="Chen N."/>
            <person name="Zhang J."/>
            <person name="Yue J."/>
            <person name="Cao M."/>
            <person name="Zhang C."/>
            <person name="Wang Y."/>
            <person name="Chang Z."/>
            <person name="Lu X.M."/>
            <person name="Chang L."/>
            <person name="Chinn Y.E."/>
        </authorList>
    </citation>
    <scope>FUNCTION</scope>
    <scope>ACETYLATION AT LYS-667</scope>
    <scope>SUBCELLULAR LOCATION</scope>
</reference>
<reference key="15">
    <citation type="journal article" date="2006" name="Science">
        <title>The consensus coding sequences of human breast and colorectal cancers.</title>
        <authorList>
            <person name="Sjoeblom T."/>
            <person name="Jones S."/>
            <person name="Wood L.D."/>
            <person name="Parsons D.W."/>
            <person name="Lin J."/>
            <person name="Barber T.D."/>
            <person name="Mandelker D."/>
            <person name="Leary R.J."/>
            <person name="Ptak J."/>
            <person name="Silliman N."/>
            <person name="Szabo S."/>
            <person name="Buckhaults P."/>
            <person name="Farrell C."/>
            <person name="Meeh P."/>
            <person name="Markowitz S.D."/>
            <person name="Willis J."/>
            <person name="Dawson D."/>
            <person name="Willson J.K.V."/>
            <person name="Gazdar A.F."/>
            <person name="Hartigan J."/>
            <person name="Wu L."/>
            <person name="Liu C."/>
            <person name="Parmigiani G."/>
            <person name="Park B.H."/>
            <person name="Bachman K.E."/>
            <person name="Papadopoulos N."/>
            <person name="Vogelstein B."/>
            <person name="Kinzler K.W."/>
            <person name="Velculescu V.E."/>
        </authorList>
    </citation>
    <scope>VARIANT [LARGE SCALE ANALYSIS] GLN-112</scope>
</reference>
<reference key="16">
    <citation type="journal article" date="2007" name="N. Engl. J. Med.">
        <title>STAT4 and the risk of rheumatoid arthritis and systemic lupus erythematosus.</title>
        <authorList>
            <person name="Remmers E.F."/>
            <person name="Plenge R.M."/>
            <person name="Lee A.T."/>
            <person name="Graham R.R."/>
            <person name="Hom G."/>
            <person name="Behrens T.W."/>
            <person name="de Bakker P.I.W."/>
            <person name="Le J.M."/>
            <person name="Lee H.-S."/>
            <person name="Batliwalla F."/>
            <person name="Li W."/>
            <person name="Masters S.L."/>
            <person name="Booty M.G."/>
            <person name="Carulli J.P."/>
            <person name="Padyukov L."/>
            <person name="Alfredsson L."/>
            <person name="Klareskog L."/>
            <person name="Chen W.V."/>
            <person name="Amos C.I."/>
            <person name="Criswell L.A."/>
            <person name="Seldin M.F."/>
            <person name="Kastner D.L."/>
            <person name="Gregersen P.K."/>
        </authorList>
    </citation>
    <scope>INVOLVEMENT IN SLEB11 AND RA</scope>
</reference>
<reference key="17">
    <citation type="journal article" date="2023" name="N. Engl. J. Med.">
        <title>Variant STAT4 and Response to Ruxolitinib in an Autoinflammatory Syndrome.</title>
        <authorList>
            <person name="Baghdassarian H."/>
            <person name="Blackstone S.A."/>
            <person name="Clay O.S."/>
            <person name="Philips R."/>
            <person name="Matthiasardottir B."/>
            <person name="Nehrebecky M."/>
            <person name="Hua V.K."/>
            <person name="McVicar R."/>
            <person name="Liu Y."/>
            <person name="Tucker S.M."/>
            <person name="Randazzo D."/>
            <person name="Deuitch N."/>
            <person name="Rosenzweig S."/>
            <person name="Mark A."/>
            <person name="Sasik R."/>
            <person name="Fisch K.M."/>
            <person name="Pimpale Chavan P."/>
            <person name="Eren E."/>
            <person name="Watts N.R."/>
            <person name="Ma C.A."/>
            <person name="Gadina M."/>
            <person name="Schwartz D.M."/>
            <person name="Sanyal A."/>
            <person name="Werner G."/>
            <person name="Murdock D.R."/>
            <person name="Horita N."/>
            <person name="Chowdhury S."/>
            <person name="Dimmock D."/>
            <person name="Jepsen K."/>
            <person name="Remmers E.F."/>
            <person name="Goldbach-Mansky R."/>
            <person name="Gahl W.A."/>
            <person name="O'Shea J.J."/>
            <person name="Milner J.D."/>
            <person name="Lewis N.E."/>
            <person name="Chang J."/>
            <person name="Kastner D.L."/>
            <person name="Torok K."/>
            <person name="Oda H."/>
            <person name="Putnam C.D."/>
            <person name="Broderick L."/>
        </authorList>
    </citation>
    <scope>INVOLVEMENT IN DPMC</scope>
    <scope>VARIANTS DPMC TYR-623; VAL-635 AND ASP-650</scope>
    <scope>CHARACTERIZATION OF VARIANTS DPMC TYR-623; VAL-635 AND ASP-650</scope>
    <scope>MUTAGENESIS OF TYR-693</scope>
    <scope>FUNCTION</scope>
    <scope>SUBCELLULAR LOCATION</scope>
</reference>
<proteinExistence type="evidence at protein level"/>
<dbReference type="EMBL" id="L78440">
    <property type="protein sequence ID" value="AAB05605.1"/>
    <property type="molecule type" value="mRNA"/>
</dbReference>
<dbReference type="EMBL" id="BC031212">
    <property type="protein sequence ID" value="AAH31212.1"/>
    <property type="molecule type" value="mRNA"/>
</dbReference>
<dbReference type="EMBL" id="AF423072">
    <property type="protein sequence ID" value="AAL12164.1"/>
    <property type="molecule type" value="Genomic_DNA"/>
</dbReference>
<dbReference type="CCDS" id="CCDS2310.1"/>
<dbReference type="RefSeq" id="NP_001230764.1">
    <property type="nucleotide sequence ID" value="NM_001243835.2"/>
</dbReference>
<dbReference type="RefSeq" id="NP_003142.1">
    <property type="nucleotide sequence ID" value="NM_003151.4"/>
</dbReference>
<dbReference type="RefSeq" id="XP_006712782.1">
    <property type="nucleotide sequence ID" value="XM_006712719.4"/>
</dbReference>
<dbReference type="RefSeq" id="XP_011510007.1">
    <property type="nucleotide sequence ID" value="XM_011511705.2"/>
</dbReference>
<dbReference type="RefSeq" id="XP_047301559.1">
    <property type="nucleotide sequence ID" value="XM_047445603.1"/>
</dbReference>
<dbReference type="RefSeq" id="XP_047301560.1">
    <property type="nucleotide sequence ID" value="XM_047445604.1"/>
</dbReference>
<dbReference type="RefSeq" id="XP_054199537.1">
    <property type="nucleotide sequence ID" value="XM_054343562.1"/>
</dbReference>
<dbReference type="RefSeq" id="XP_054199538.1">
    <property type="nucleotide sequence ID" value="XM_054343563.1"/>
</dbReference>
<dbReference type="RefSeq" id="XP_054199539.1">
    <property type="nucleotide sequence ID" value="XM_054343564.1"/>
</dbReference>
<dbReference type="RefSeq" id="XP_054199540.1">
    <property type="nucleotide sequence ID" value="XM_054343565.1"/>
</dbReference>
<dbReference type="RefSeq" id="XP_054199541.1">
    <property type="nucleotide sequence ID" value="XM_054343566.1"/>
</dbReference>
<dbReference type="BMRB" id="Q14765"/>
<dbReference type="SMR" id="Q14765"/>
<dbReference type="BioGRID" id="112652">
    <property type="interactions" value="31"/>
</dbReference>
<dbReference type="ComplexPortal" id="CPX-6042">
    <property type="entry name" value="STAT1/STAT4 complex"/>
</dbReference>
<dbReference type="ComplexPortal" id="CPX-6046">
    <property type="entry name" value="STAT3/STAT4 complex"/>
</dbReference>
<dbReference type="ComplexPortal" id="CPX-6050">
    <property type="entry name" value="STAT4 homodimer"/>
</dbReference>
<dbReference type="DIP" id="DIP-39854N"/>
<dbReference type="FunCoup" id="Q14765">
    <property type="interactions" value="1966"/>
</dbReference>
<dbReference type="IntAct" id="Q14765">
    <property type="interactions" value="42"/>
</dbReference>
<dbReference type="MINT" id="Q14765"/>
<dbReference type="STRING" id="9606.ENSP00000351255"/>
<dbReference type="BindingDB" id="Q14765"/>
<dbReference type="ChEMBL" id="CHEMBL4523296"/>
<dbReference type="GlyCosmos" id="Q14765">
    <property type="glycosylation" value="3 sites, 1 glycan"/>
</dbReference>
<dbReference type="GlyGen" id="Q14765">
    <property type="glycosylation" value="3 sites, 1 O-linked glycan (3 sites)"/>
</dbReference>
<dbReference type="iPTMnet" id="Q14765"/>
<dbReference type="PhosphoSitePlus" id="Q14765"/>
<dbReference type="BioMuta" id="STAT4"/>
<dbReference type="DMDM" id="6226158"/>
<dbReference type="CPTAC" id="CPTAC-1277"/>
<dbReference type="jPOST" id="Q14765"/>
<dbReference type="MassIVE" id="Q14765"/>
<dbReference type="PaxDb" id="9606-ENSP00000376134"/>
<dbReference type="PeptideAtlas" id="Q14765"/>
<dbReference type="ProteomicsDB" id="60158"/>
<dbReference type="ABCD" id="Q14765">
    <property type="antibodies" value="2 sequenced antibodies"/>
</dbReference>
<dbReference type="Antibodypedia" id="661">
    <property type="antibodies" value="1193 antibodies from 46 providers"/>
</dbReference>
<dbReference type="DNASU" id="6775"/>
<dbReference type="Ensembl" id="ENST00000358470.8">
    <property type="protein sequence ID" value="ENSP00000351255.4"/>
    <property type="gene ID" value="ENSG00000138378.20"/>
</dbReference>
<dbReference type="Ensembl" id="ENST00000392320.7">
    <property type="protein sequence ID" value="ENSP00000376134.2"/>
    <property type="gene ID" value="ENSG00000138378.20"/>
</dbReference>
<dbReference type="Ensembl" id="ENST00000432798.2">
    <property type="protein sequence ID" value="ENSP00000414322.2"/>
    <property type="gene ID" value="ENSG00000138378.20"/>
</dbReference>
<dbReference type="Ensembl" id="ENST00000450994.2">
    <property type="protein sequence ID" value="ENSP00000412397.2"/>
    <property type="gene ID" value="ENSG00000138378.20"/>
</dbReference>
<dbReference type="GeneID" id="6775"/>
<dbReference type="KEGG" id="hsa:6775"/>
<dbReference type="MANE-Select" id="ENST00000392320.7">
    <property type="protein sequence ID" value="ENSP00000376134.2"/>
    <property type="RefSeq nucleotide sequence ID" value="NM_003151.4"/>
    <property type="RefSeq protein sequence ID" value="NP_003142.1"/>
</dbReference>
<dbReference type="UCSC" id="uc002usm.3">
    <property type="organism name" value="human"/>
</dbReference>
<dbReference type="AGR" id="HGNC:11365"/>
<dbReference type="CTD" id="6775"/>
<dbReference type="DisGeNET" id="6775"/>
<dbReference type="GeneCards" id="STAT4"/>
<dbReference type="HGNC" id="HGNC:11365">
    <property type="gene designation" value="STAT4"/>
</dbReference>
<dbReference type="HPA" id="ENSG00000138378">
    <property type="expression patterns" value="Tissue enhanced (testis)"/>
</dbReference>
<dbReference type="MalaCards" id="STAT4"/>
<dbReference type="MIM" id="180300">
    <property type="type" value="phenotype"/>
</dbReference>
<dbReference type="MIM" id="600558">
    <property type="type" value="gene"/>
</dbReference>
<dbReference type="MIM" id="612253">
    <property type="type" value="phenotype"/>
</dbReference>
<dbReference type="MIM" id="620443">
    <property type="type" value="phenotype"/>
</dbReference>
<dbReference type="neXtProt" id="NX_Q14765"/>
<dbReference type="OpenTargets" id="ENSG00000138378"/>
<dbReference type="Orphanet" id="117">
    <property type="disease" value="Behcet disease"/>
</dbReference>
<dbReference type="Orphanet" id="85410">
    <property type="disease" value="Oligoarticular juvenile idiopathic arthritis"/>
</dbReference>
<dbReference type="Orphanet" id="93552">
    <property type="disease" value="Pediatric systemic lupus erythematosus"/>
</dbReference>
<dbReference type="Orphanet" id="85408">
    <property type="disease" value="Rheumatoid factor-negative polyarticular juvenile idiopathic arthritis"/>
</dbReference>
<dbReference type="Orphanet" id="536">
    <property type="disease" value="Systemic lupus erythematosus"/>
</dbReference>
<dbReference type="PharmGKB" id="PA36185"/>
<dbReference type="VEuPathDB" id="HostDB:ENSG00000138378"/>
<dbReference type="eggNOG" id="KOG3667">
    <property type="taxonomic scope" value="Eukaryota"/>
</dbReference>
<dbReference type="GeneTree" id="ENSGT01050000244905"/>
<dbReference type="HOGENOM" id="CLU_014189_3_0_1"/>
<dbReference type="InParanoid" id="Q14765"/>
<dbReference type="OMA" id="EGSHMVT"/>
<dbReference type="OrthoDB" id="9511583at2759"/>
<dbReference type="PAN-GO" id="Q14765">
    <property type="GO annotations" value="8 GO annotations based on evolutionary models"/>
</dbReference>
<dbReference type="PhylomeDB" id="Q14765"/>
<dbReference type="TreeFam" id="TF318648"/>
<dbReference type="PathwayCommons" id="Q14765"/>
<dbReference type="Reactome" id="R-HSA-8854691">
    <property type="pathway name" value="Interleukin-20 family signaling"/>
</dbReference>
<dbReference type="Reactome" id="R-HSA-8950505">
    <property type="pathway name" value="Gene and protein expression by JAK-STAT signaling after Interleukin-12 stimulation"/>
</dbReference>
<dbReference type="Reactome" id="R-HSA-8984722">
    <property type="pathway name" value="Interleukin-35 Signalling"/>
</dbReference>
<dbReference type="Reactome" id="R-HSA-9020591">
    <property type="pathway name" value="Interleukin-12 signaling"/>
</dbReference>
<dbReference type="Reactome" id="R-HSA-9020933">
    <property type="pathway name" value="Interleukin-23 signaling"/>
</dbReference>
<dbReference type="Reactome" id="R-HSA-9020958">
    <property type="pathway name" value="Interleukin-21 signaling"/>
</dbReference>
<dbReference type="SignaLink" id="Q14765"/>
<dbReference type="SIGNOR" id="Q14765"/>
<dbReference type="BioGRID-ORCS" id="6775">
    <property type="hits" value="12 hits in 1179 CRISPR screens"/>
</dbReference>
<dbReference type="ChiTaRS" id="STAT4">
    <property type="organism name" value="human"/>
</dbReference>
<dbReference type="GeneWiki" id="STAT4"/>
<dbReference type="GenomeRNAi" id="6775"/>
<dbReference type="Pharos" id="Q14765">
    <property type="development level" value="Tchem"/>
</dbReference>
<dbReference type="PRO" id="PR:Q14765"/>
<dbReference type="Proteomes" id="UP000005640">
    <property type="component" value="Chromosome 2"/>
</dbReference>
<dbReference type="RNAct" id="Q14765">
    <property type="molecule type" value="protein"/>
</dbReference>
<dbReference type="Bgee" id="ENSG00000138378">
    <property type="expression patterns" value="Expressed in granulocyte and 123 other cell types or tissues"/>
</dbReference>
<dbReference type="ExpressionAtlas" id="Q14765">
    <property type="expression patterns" value="baseline and differential"/>
</dbReference>
<dbReference type="GO" id="GO:0000785">
    <property type="term" value="C:chromatin"/>
    <property type="evidence" value="ECO:0000247"/>
    <property type="project" value="NTNU_SB"/>
</dbReference>
<dbReference type="GO" id="GO:0005737">
    <property type="term" value="C:cytoplasm"/>
    <property type="evidence" value="ECO:0000318"/>
    <property type="project" value="GO_Central"/>
</dbReference>
<dbReference type="GO" id="GO:0005829">
    <property type="term" value="C:cytosol"/>
    <property type="evidence" value="ECO:0000304"/>
    <property type="project" value="Reactome"/>
</dbReference>
<dbReference type="GO" id="GO:0016604">
    <property type="term" value="C:nuclear body"/>
    <property type="evidence" value="ECO:0000314"/>
    <property type="project" value="HPA"/>
</dbReference>
<dbReference type="GO" id="GO:0005654">
    <property type="term" value="C:nucleoplasm"/>
    <property type="evidence" value="ECO:0000314"/>
    <property type="project" value="HPA"/>
</dbReference>
<dbReference type="GO" id="GO:0005634">
    <property type="term" value="C:nucleus"/>
    <property type="evidence" value="ECO:0000314"/>
    <property type="project" value="UniProt"/>
</dbReference>
<dbReference type="GO" id="GO:0090575">
    <property type="term" value="C:RNA polymerase II transcription regulator complex"/>
    <property type="evidence" value="ECO:0000353"/>
    <property type="project" value="ComplexPortal"/>
</dbReference>
<dbReference type="GO" id="GO:0003700">
    <property type="term" value="F:DNA-binding transcription factor activity"/>
    <property type="evidence" value="ECO:0000314"/>
    <property type="project" value="UniProt"/>
</dbReference>
<dbReference type="GO" id="GO:0000981">
    <property type="term" value="F:DNA-binding transcription factor activity, RNA polymerase II-specific"/>
    <property type="evidence" value="ECO:0000247"/>
    <property type="project" value="NTNU_SB"/>
</dbReference>
<dbReference type="GO" id="GO:0042802">
    <property type="term" value="F:identical protein binding"/>
    <property type="evidence" value="ECO:0000353"/>
    <property type="project" value="IntAct"/>
</dbReference>
<dbReference type="GO" id="GO:0000978">
    <property type="term" value="F:RNA polymerase II cis-regulatory region sequence-specific DNA binding"/>
    <property type="evidence" value="ECO:0000318"/>
    <property type="project" value="GO_Central"/>
</dbReference>
<dbReference type="GO" id="GO:0007259">
    <property type="term" value="P:cell surface receptor signaling pathway via JAK-STAT"/>
    <property type="evidence" value="ECO:0000318"/>
    <property type="project" value="GO_Central"/>
</dbReference>
<dbReference type="GO" id="GO:0019221">
    <property type="term" value="P:cytokine-mediated signaling pathway"/>
    <property type="evidence" value="ECO:0000318"/>
    <property type="project" value="GO_Central"/>
</dbReference>
<dbReference type="GO" id="GO:0006952">
    <property type="term" value="P:defense response"/>
    <property type="evidence" value="ECO:0000318"/>
    <property type="project" value="GO_Central"/>
</dbReference>
<dbReference type="GO" id="GO:0035722">
    <property type="term" value="P:interleukin-12-mediated signaling pathway"/>
    <property type="evidence" value="ECO:0000314"/>
    <property type="project" value="UniProt"/>
</dbReference>
<dbReference type="GO" id="GO:0045944">
    <property type="term" value="P:positive regulation of transcription by RNA polymerase II"/>
    <property type="evidence" value="ECO:0000303"/>
    <property type="project" value="ComplexPortal"/>
</dbReference>
<dbReference type="GO" id="GO:0042127">
    <property type="term" value="P:regulation of cell population proliferation"/>
    <property type="evidence" value="ECO:0000318"/>
    <property type="project" value="GO_Central"/>
</dbReference>
<dbReference type="GO" id="GO:0006357">
    <property type="term" value="P:regulation of transcription by RNA polymerase II"/>
    <property type="evidence" value="ECO:0000318"/>
    <property type="project" value="GO_Central"/>
</dbReference>
<dbReference type="GO" id="GO:0070741">
    <property type="term" value="P:response to interleukin-6"/>
    <property type="evidence" value="ECO:0000315"/>
    <property type="project" value="UniProtKB"/>
</dbReference>
<dbReference type="GO" id="GO:0043434">
    <property type="term" value="P:response to peptide hormone"/>
    <property type="evidence" value="ECO:0000318"/>
    <property type="project" value="GO_Central"/>
</dbReference>
<dbReference type="GO" id="GO:0045063">
    <property type="term" value="P:T-helper 1 cell differentiation"/>
    <property type="evidence" value="ECO:0000314"/>
    <property type="project" value="UniProt"/>
</dbReference>
<dbReference type="CDD" id="cd10375">
    <property type="entry name" value="SH2_STAT4"/>
    <property type="match status" value="1"/>
</dbReference>
<dbReference type="CDD" id="cd16854">
    <property type="entry name" value="STAT4_CCD"/>
    <property type="match status" value="1"/>
</dbReference>
<dbReference type="CDD" id="cd16848">
    <property type="entry name" value="STAT4_DBD"/>
    <property type="match status" value="1"/>
</dbReference>
<dbReference type="FunFam" id="1.10.238.10:FF:000012">
    <property type="entry name" value="Signal transducer and activator of transcription"/>
    <property type="match status" value="1"/>
</dbReference>
<dbReference type="FunFam" id="1.10.532.10:FF:000001">
    <property type="entry name" value="Signal transducer and activator of transcription"/>
    <property type="match status" value="1"/>
</dbReference>
<dbReference type="FunFam" id="1.20.1050.20:FF:000001">
    <property type="entry name" value="Signal transducer and activator of transcription"/>
    <property type="match status" value="1"/>
</dbReference>
<dbReference type="FunFam" id="3.30.505.10:FF:000003">
    <property type="entry name" value="Signal transducer and activator of transcription"/>
    <property type="match status" value="1"/>
</dbReference>
<dbReference type="FunFam" id="2.60.40.630:FF:000007">
    <property type="entry name" value="Signal transducer and activator of transcription 3"/>
    <property type="match status" value="1"/>
</dbReference>
<dbReference type="FunFam" id="2.60.40.630:FF:000008">
    <property type="entry name" value="signal transducer and activator of transcription 4"/>
    <property type="match status" value="1"/>
</dbReference>
<dbReference type="Gene3D" id="1.10.238.10">
    <property type="entry name" value="EF-hand"/>
    <property type="match status" value="1"/>
</dbReference>
<dbReference type="Gene3D" id="3.30.505.10">
    <property type="entry name" value="SH2 domain"/>
    <property type="match status" value="1"/>
</dbReference>
<dbReference type="Gene3D" id="1.20.1050.20">
    <property type="entry name" value="STAT transcription factor, all-alpha domain"/>
    <property type="match status" value="1"/>
</dbReference>
<dbReference type="Gene3D" id="2.60.40.630">
    <property type="entry name" value="STAT transcription factor, DNA-binding domain"/>
    <property type="match status" value="1"/>
</dbReference>
<dbReference type="Gene3D" id="1.10.532.10">
    <property type="entry name" value="STAT transcription factor, N-terminal domain"/>
    <property type="match status" value="1"/>
</dbReference>
<dbReference type="InterPro" id="IPR008967">
    <property type="entry name" value="p53-like_TF_DNA-bd_sf"/>
</dbReference>
<dbReference type="InterPro" id="IPR000980">
    <property type="entry name" value="SH2"/>
</dbReference>
<dbReference type="InterPro" id="IPR036860">
    <property type="entry name" value="SH2_dom_sf"/>
</dbReference>
<dbReference type="InterPro" id="IPR001217">
    <property type="entry name" value="STAT"/>
</dbReference>
<dbReference type="InterPro" id="IPR046991">
    <property type="entry name" value="STAT4_CCD"/>
</dbReference>
<dbReference type="InterPro" id="IPR029839">
    <property type="entry name" value="STAT4_DBD"/>
</dbReference>
<dbReference type="InterPro" id="IPR035856">
    <property type="entry name" value="STAT4_SH2"/>
</dbReference>
<dbReference type="InterPro" id="IPR048988">
    <property type="entry name" value="STAT_linker"/>
</dbReference>
<dbReference type="InterPro" id="IPR036535">
    <property type="entry name" value="STAT_N_sf"/>
</dbReference>
<dbReference type="InterPro" id="IPR013800">
    <property type="entry name" value="STAT_TF_alpha"/>
</dbReference>
<dbReference type="InterPro" id="IPR015988">
    <property type="entry name" value="STAT_TF_coiled-coil"/>
</dbReference>
<dbReference type="InterPro" id="IPR013801">
    <property type="entry name" value="STAT_TF_DNA-bd"/>
</dbReference>
<dbReference type="InterPro" id="IPR012345">
    <property type="entry name" value="STAT_TF_DNA-bd_N"/>
</dbReference>
<dbReference type="InterPro" id="IPR013799">
    <property type="entry name" value="STAT_TF_prot_interaction"/>
</dbReference>
<dbReference type="PANTHER" id="PTHR11801">
    <property type="entry name" value="SIGNAL TRANSDUCER AND ACTIVATOR OF TRANSCRIPTION"/>
    <property type="match status" value="1"/>
</dbReference>
<dbReference type="Pfam" id="PF00017">
    <property type="entry name" value="SH2"/>
    <property type="match status" value="1"/>
</dbReference>
<dbReference type="Pfam" id="PF01017">
    <property type="entry name" value="STAT_alpha"/>
    <property type="match status" value="1"/>
</dbReference>
<dbReference type="Pfam" id="PF02864">
    <property type="entry name" value="STAT_bind"/>
    <property type="match status" value="1"/>
</dbReference>
<dbReference type="Pfam" id="PF02865">
    <property type="entry name" value="STAT_int"/>
    <property type="match status" value="1"/>
</dbReference>
<dbReference type="Pfam" id="PF21354">
    <property type="entry name" value="STAT_linker"/>
    <property type="match status" value="1"/>
</dbReference>
<dbReference type="SMART" id="SM00964">
    <property type="entry name" value="STAT_int"/>
    <property type="match status" value="1"/>
</dbReference>
<dbReference type="SUPFAM" id="SSF49417">
    <property type="entry name" value="p53-like transcription factors"/>
    <property type="match status" value="1"/>
</dbReference>
<dbReference type="SUPFAM" id="SSF55550">
    <property type="entry name" value="SH2 domain"/>
    <property type="match status" value="1"/>
</dbReference>
<dbReference type="SUPFAM" id="SSF47655">
    <property type="entry name" value="STAT"/>
    <property type="match status" value="1"/>
</dbReference>
<dbReference type="SUPFAM" id="SSF48092">
    <property type="entry name" value="Transcription factor STAT-4 N-domain"/>
    <property type="match status" value="1"/>
</dbReference>
<dbReference type="PROSITE" id="PS50001">
    <property type="entry name" value="SH2"/>
    <property type="match status" value="1"/>
</dbReference>
<organism>
    <name type="scientific">Homo sapiens</name>
    <name type="common">Human</name>
    <dbReference type="NCBI Taxonomy" id="9606"/>
    <lineage>
        <taxon>Eukaryota</taxon>
        <taxon>Metazoa</taxon>
        <taxon>Chordata</taxon>
        <taxon>Craniata</taxon>
        <taxon>Vertebrata</taxon>
        <taxon>Euteleostomi</taxon>
        <taxon>Mammalia</taxon>
        <taxon>Eutheria</taxon>
        <taxon>Euarchontoglires</taxon>
        <taxon>Primates</taxon>
        <taxon>Haplorrhini</taxon>
        <taxon>Catarrhini</taxon>
        <taxon>Hominidae</taxon>
        <taxon>Homo</taxon>
    </lineage>
</organism>
<evidence type="ECO:0000250" key="1"/>
<evidence type="ECO:0000250" key="2">
    <source>
        <dbReference type="UniProtKB" id="P42228"/>
    </source>
</evidence>
<evidence type="ECO:0000255" key="3">
    <source>
        <dbReference type="PROSITE-ProRule" id="PRU00191"/>
    </source>
</evidence>
<evidence type="ECO:0000269" key="4">
    <source>
    </source>
</evidence>
<evidence type="ECO:0000269" key="5">
    <source>
    </source>
</evidence>
<evidence type="ECO:0000269" key="6">
    <source>
    </source>
</evidence>
<evidence type="ECO:0000269" key="7">
    <source>
    </source>
</evidence>
<evidence type="ECO:0000269" key="8">
    <source>
    </source>
</evidence>
<evidence type="ECO:0000269" key="9">
    <source>
    </source>
</evidence>
<evidence type="ECO:0000269" key="10">
    <source>
    </source>
</evidence>
<evidence type="ECO:0000269" key="11">
    <source>
    </source>
</evidence>
<evidence type="ECO:0000269" key="12">
    <source>
    </source>
</evidence>
<evidence type="ECO:0000269" key="13">
    <source>
    </source>
</evidence>
<evidence type="ECO:0000269" key="14">
    <source>
    </source>
</evidence>
<evidence type="ECO:0000269" key="15">
    <source>
    </source>
</evidence>
<evidence type="ECO:0000269" key="16">
    <source>
    </source>
</evidence>
<evidence type="ECO:0000269" key="17">
    <source>
    </source>
</evidence>
<evidence type="ECO:0000305" key="18"/>
<name>STAT4_HUMAN</name>
<comment type="function">
    <text evidence="2 4 5 6 7 11 12 13 14 15 16">Transcriptional regulator mainly expressed in hematopoietic cells that plays a critical role in cellular growth, differentiation and immune response (PubMed:10961885, PubMed:37256972, PubMed:8943379). Plays a key role in the differentiation of T-helper 1 cells and the production of interferon-gamma (PubMed:12213961, PubMed:35614130). Also participates in multiple neutrophil functions including chemotaxis and production of the neutrophil extracellular traps (By similarity). After IL12 binding to its receptor IL12RB2, STAT4 interacts with the intracellular domain of IL12RB2 and becomes tyrosine phosphorylated (PubMed:10415122, PubMed:7638186). Phosphorylated STAT4 then homodimerizes and migrates to the nucleus where it can recognize STAT target sequences present in IL12 responsive genes. Although IL12 appears to be the predominant activating signal, STAT4 can also be phosphorylated and activated in response to IFN-gamma stimulation via JAK1 and TYK2 and in response to different interleukins including IL23, IL2 and IL35 (PubMed:11114383, PubMed:34508746). Transcription activation of IFN-gamma gene is mediated by interaction with JUN that forms a complex that efficiently interacts with the AP-1-related sequence of the IFN-gamma promoter (By similarity). In response to IFN-alpha/beta signaling, acts as a transcriptional repressor and suppresses IL5 and IL13 mRNA expression during response to T-cell receptor (TCR) activation (PubMed:26990433).</text>
</comment>
<comment type="subunit">
    <text evidence="1 2 4 12 17">Forms a homodimer or a heterodimer with a related family member. Interacts with ARL2BP (By similarity). The SH2 domain interacts, in vitro, with IL12RB2 via a short cytoplasmic domain. Interacts with STAT1 (PubMed:34508746). Interacts with JUN; this complex efficiently interacts with the AP-1-related sequence of the IFN-gamma (By similarity).</text>
</comment>
<comment type="interaction">
    <interactant intactId="EBI-1186538">
        <id>Q14765</id>
    </interactant>
    <interactant intactId="EBI-948266">
        <id>O14901</id>
        <label>KLF11</label>
    </interactant>
    <organismsDiffer>false</organismsDiffer>
    <experiments>3</experiments>
</comment>
<comment type="interaction">
    <interactant intactId="EBI-1186538">
        <id>Q14765</id>
    </interactant>
    <interactant intactId="EBI-713382">
        <id>O43504</id>
        <label>LAMTOR5</label>
    </interactant>
    <organismsDiffer>false</organismsDiffer>
    <experiments>2</experiments>
</comment>
<comment type="interaction">
    <interactant intactId="EBI-1186538">
        <id>Q14765</id>
    </interactant>
    <interactant intactId="EBI-2811583">
        <id>Q9BVL2</id>
        <label>NUP58</label>
    </interactant>
    <organismsDiffer>false</organismsDiffer>
    <experiments>3</experiments>
</comment>
<comment type="interaction">
    <interactant intactId="EBI-1186538">
        <id>Q14765</id>
    </interactant>
    <interactant intactId="EBI-1186538">
        <id>Q14765</id>
        <label>STAT4</label>
    </interactant>
    <organismsDiffer>false</organismsDiffer>
    <experiments>2</experiments>
</comment>
<comment type="subcellular location">
    <subcellularLocation>
        <location>Cytoplasm</location>
    </subcellularLocation>
    <subcellularLocation>
        <location evidence="13 14">Nucleus</location>
    </subcellularLocation>
    <text evidence="13">Translocated into the nucleus in response to phosphorylation.</text>
</comment>
<comment type="PTM">
    <text evidence="13">Acetylation at Lys-667 is required for JAK2-mediated phosphorylation and activation of STAT4.</text>
</comment>
<comment type="PTM">
    <text evidence="5 7 16">Tyrosine phosphorylated upon IL12 and IFN-alpha activation, but not by IFN-gamma in T-lymphocytes and NK cells (PubMed:8943379). Serine phosphorylation is required for maximal transcriptional activity but not for DNA binding (PubMed:8943379). Phosphorylation by MAP2K6 at Ser-721 is required for full transcriptional activity induced by IL12 (PubMed:10961885). However this serine phosphorylation is not required for cell proliferation although critical for IFN-gamma production (PubMed:12213961).</text>
</comment>
<comment type="disease" evidence="9 10">
    <disease id="DI-02653">
        <name>Systemic lupus erythematosus 11</name>
        <acronym>SLEB11</acronym>
        <description>A chronic, relapsing, inflammatory, and often febrile multisystemic disorder of connective tissue, characterized principally by involvement of the skin, joints, kidneys and serosal membranes. It is of unknown etiology, but is thought to represent a failure of the regulatory mechanisms of the autoimmune system. The disease is marked by a wide range of system dysfunctions, an elevated erythrocyte sedimentation rate, and the formation of LE cells in the blood or bone marrow.</description>
        <dbReference type="MIM" id="612253"/>
    </disease>
    <text>Disease susceptibility is associated with variants affecting the gene represented in this entry.</text>
</comment>
<comment type="disease" evidence="9">
    <disease id="DI-02692">
        <name>Rheumatoid arthritis</name>
        <acronym>RA</acronym>
        <description>An inflammatory disease with autoimmune features and a complex genetic component. It primarily affects the joints and is characterized by inflammatory changes in the synovial membranes and articular structures, widespread fibrinoid degeneration of the collagen fibers in mesenchymal tissues, and by atrophy and rarefaction of bony structures.</description>
        <dbReference type="MIM" id="180300"/>
    </disease>
    <text>Disease susceptibility is associated with variants affecting the gene represented in this entry.</text>
</comment>
<comment type="disease" evidence="14">
    <disease id="DI-06718">
        <name>Disabling pansclerotic morphea of childhood</name>
        <acronym>DPMC</acronym>
        <description>An autosomal dominant, severe systemic inflammatory disorder that is part of the juvenile localized scleroderma spectrum. DPMC is characterized by poor wound healing with rapidly progressive deep fibrosis involving the mucous membranes, dermis, subcutaneous fat, fascia, muscles, and bone, leading to contractures, musculoskeletal atrophy, and articular ankylosis. Systemic manifestations include cytopenias and hypogammaglobulinemia, but scleroderma-associated autoantibodies are usually not present. The disorder is associated with high morbidity and mortality due to squamous-cell carcinoma, restrictive pulmonary disease, sepsis, and gangrene.</description>
        <dbReference type="MIM" id="620443"/>
    </disease>
    <text>The disease is caused by variants affecting the gene represented in this entry.</text>
</comment>
<comment type="similarity">
    <text evidence="18">Belongs to the transcription factor STAT family.</text>
</comment>
<gene>
    <name type="primary">STAT4</name>
</gene>
<feature type="chain" id="PRO_0000182420" description="Signal transducer and activator of transcription 4">
    <location>
        <begin position="1"/>
        <end position="748"/>
    </location>
</feature>
<feature type="domain" description="SH2" evidence="3">
    <location>
        <begin position="569"/>
        <end position="664"/>
    </location>
</feature>
<feature type="modified residue" description="N6-acetyllysine" evidence="13">
    <location>
        <position position="667"/>
    </location>
</feature>
<feature type="modified residue" description="Phosphotyrosine; by JAK" evidence="5">
    <location>
        <position position="693"/>
    </location>
</feature>
<feature type="modified residue" description="Phosphoserine; by MAP2K6" evidence="5">
    <location>
        <position position="721"/>
    </location>
</feature>
<feature type="sequence variant" id="VAR_036002" description="In a breast cancer sample; somatic mutation." evidence="8">
    <original>E</original>
    <variation>Q</variation>
    <location>
        <position position="112"/>
    </location>
</feature>
<feature type="sequence variant" id="VAR_020190" description="In dbSNP:rs3024839.">
    <original>I</original>
    <variation>V</variation>
    <location>
        <position position="115"/>
    </location>
</feature>
<feature type="sequence variant" id="VAR_047939" description="In dbSNP:rs3024933.">
    <original>R</original>
    <variation>W</variation>
    <location>
        <position position="584"/>
    </location>
</feature>
<feature type="sequence variant" id="VAR_088806" description="In DPMC; likely pathogenic; increased function in receptor signaling pathway via JAK-STAT." evidence="14">
    <original>H</original>
    <variation>Y</variation>
    <location>
        <position position="623"/>
    </location>
</feature>
<feature type="sequence variant" id="VAR_088807" description="In DPMC; likely pathogenic; increased function in receptor signaling pathway via JAK-STAT." evidence="14">
    <original>A</original>
    <variation>V</variation>
    <location>
        <position position="635"/>
    </location>
</feature>
<feature type="sequence variant" id="VAR_088808" description="In DPMC; likely pathogenic; increased function in receptor signaling pathway via JAK-STAT." evidence="14">
    <original>A</original>
    <variation>D</variation>
    <location>
        <position position="650"/>
    </location>
</feature>
<feature type="mutagenesis site" description="Abrogates phosphorylation and transcriptional activity." evidence="5 14">
    <original>Y</original>
    <variation>A</variation>
    <location>
        <position position="693"/>
    </location>
</feature>
<feature type="mutagenesis site" description="About 50% loss of transcriptional activity." evidence="5">
    <original>S</original>
    <variation>A</variation>
    <location>
        <position position="721"/>
    </location>
</feature>
<feature type="sequence conflict" description="In Ref. 3; AAL12164." evidence="18" ref="3">
    <original>KNVSTLS</original>
    <variation>N</variation>
    <location>
        <begin position="365"/>
        <end position="371"/>
    </location>
</feature>
<accession>Q14765</accession>
<accession>Q96NZ6</accession>
<protein>
    <recommendedName>
        <fullName>Signal transducer and activator of transcription 4</fullName>
    </recommendedName>
</protein>
<keyword id="KW-0007">Acetylation</keyword>
<keyword id="KW-0010">Activator</keyword>
<keyword id="KW-0963">Cytoplasm</keyword>
<keyword id="KW-0225">Disease variant</keyword>
<keyword id="KW-0238">DNA-binding</keyword>
<keyword id="KW-0539">Nucleus</keyword>
<keyword id="KW-0597">Phosphoprotein</keyword>
<keyword id="KW-1267">Proteomics identification</keyword>
<keyword id="KW-1185">Reference proteome</keyword>
<keyword id="KW-0727">SH2 domain</keyword>
<keyword id="KW-0772">Systemic lupus erythematosus</keyword>
<keyword id="KW-0804">Transcription</keyword>
<keyword id="KW-0805">Transcription regulation</keyword>